<evidence type="ECO:0000250" key="1">
    <source>
        <dbReference type="UniProtKB" id="Q8U248"/>
    </source>
</evidence>
<evidence type="ECO:0000255" key="2">
    <source>
        <dbReference type="PROSITE-ProRule" id="PRU00529"/>
    </source>
</evidence>
<evidence type="ECO:0000269" key="3">
    <source>
    </source>
</evidence>
<evidence type="ECO:0000269" key="4">
    <source>
    </source>
</evidence>
<evidence type="ECO:0000269" key="5">
    <source>
    </source>
</evidence>
<evidence type="ECO:0000303" key="6">
    <source>
    </source>
</evidence>
<evidence type="ECO:0000303" key="7">
    <source>
    </source>
</evidence>
<evidence type="ECO:0000305" key="8"/>
<evidence type="ECO:0000312" key="9">
    <source>
        <dbReference type="EMBL" id="AAS81499.1"/>
    </source>
</evidence>
<evidence type="ECO:0007744" key="10">
    <source>
        <dbReference type="PDB" id="3TMA"/>
    </source>
</evidence>
<evidence type="ECO:0007829" key="11">
    <source>
        <dbReference type="PDB" id="3TMA"/>
    </source>
</evidence>
<protein>
    <recommendedName>
        <fullName evidence="8">tRNA (guanine(6)-N2)-methyltransferase</fullName>
        <ecNumber evidence="4 5">2.1.1.256</ecNumber>
    </recommendedName>
    <alternativeName>
        <fullName evidence="7">tRNA:m2G6 methyltransferase</fullName>
    </alternativeName>
</protein>
<organism>
    <name type="scientific">Thermus thermophilus (strain ATCC BAA-163 / DSM 7039 / HB27)</name>
    <dbReference type="NCBI Taxonomy" id="262724"/>
    <lineage>
        <taxon>Bacteria</taxon>
        <taxon>Thermotogati</taxon>
        <taxon>Deinococcota</taxon>
        <taxon>Deinococci</taxon>
        <taxon>Thermales</taxon>
        <taxon>Thermaceae</taxon>
        <taxon>Thermus</taxon>
    </lineage>
</organism>
<keyword id="KW-0002">3D-structure</keyword>
<keyword id="KW-0963">Cytoplasm</keyword>
<keyword id="KW-0489">Methyltransferase</keyword>
<keyword id="KW-0694">RNA-binding</keyword>
<keyword id="KW-0949">S-adenosyl-L-methionine</keyword>
<keyword id="KW-0808">Transferase</keyword>
<keyword id="KW-0819">tRNA processing</keyword>
<sequence length="335" mass="36980">MWLEATTHPGLEDLLLEELSALYPGEGAEVDARKGRVRIPRAWVGEEALGLRLAHHLVLFRARLLLSREDPLGALERAALALPWPELEGAGSFRVEARREGEHPFTSPEVERRVGEALHRAYGVPVDLKRPAVRVRVDVRGEEAFLGVQLTERPLSRRFPKAALRGSLTPVLAQALLRLADARPGMRVLDPFTGSGTIALEAASTLGPTSPVYAGDLDEKRLGLAREAALASGLSWIRFLRADARHLPRFFPEVDRILANPPHGLRLGRKEGLFHLYWDFLRGALALLPPGGRVALLTLRPALLKRALPPGFALRHARVVEQGGVYPRVFVLEKL</sequence>
<accession>Q72IH5</accession>
<feature type="chain" id="PRO_0000441406" description="tRNA (guanine(6)-N2)-methyltransferase">
    <location>
        <begin position="1"/>
        <end position="335"/>
    </location>
</feature>
<feature type="domain" description="THUMP" evidence="2">
    <location>
        <begin position="47"/>
        <end position="150"/>
    </location>
</feature>
<feature type="binding site" evidence="1">
    <location>
        <begin position="195"/>
        <end position="197"/>
    </location>
    <ligand>
        <name>S-adenosyl-L-methionine</name>
        <dbReference type="ChEBI" id="CHEBI:59789"/>
    </ligand>
</feature>
<feature type="binding site" evidence="1">
    <location>
        <begin position="243"/>
        <end position="244"/>
    </location>
    <ligand>
        <name>S-adenosyl-L-methionine</name>
        <dbReference type="ChEBI" id="CHEBI:59789"/>
    </ligand>
</feature>
<feature type="binding site" evidence="1">
    <location>
        <position position="260"/>
    </location>
    <ligand>
        <name>S-adenosyl-L-methionine</name>
        <dbReference type="ChEBI" id="CHEBI:59789"/>
    </ligand>
</feature>
<feature type="mutagenesis site" description="75% decrease in activity." evidence="5">
    <original>H</original>
    <variation>A</variation>
    <location>
        <position position="263"/>
    </location>
</feature>
<feature type="strand" evidence="11">
    <location>
        <begin position="2"/>
        <end position="6"/>
    </location>
</feature>
<feature type="helix" evidence="11">
    <location>
        <begin position="12"/>
        <end position="22"/>
    </location>
</feature>
<feature type="strand" evidence="11">
    <location>
        <begin position="29"/>
        <end position="31"/>
    </location>
</feature>
<feature type="turn" evidence="11">
    <location>
        <begin position="32"/>
        <end position="35"/>
    </location>
</feature>
<feature type="strand" evidence="11">
    <location>
        <begin position="36"/>
        <end position="40"/>
    </location>
</feature>
<feature type="helix" evidence="11">
    <location>
        <begin position="46"/>
        <end position="50"/>
    </location>
</feature>
<feature type="strand" evidence="11">
    <location>
        <begin position="57"/>
        <end position="65"/>
    </location>
</feature>
<feature type="strand" evidence="11">
    <location>
        <begin position="68"/>
        <end position="70"/>
    </location>
</feature>
<feature type="helix" evidence="11">
    <location>
        <begin position="71"/>
        <end position="80"/>
    </location>
</feature>
<feature type="helix" evidence="11">
    <location>
        <begin position="87"/>
        <end position="90"/>
    </location>
</feature>
<feature type="strand" evidence="11">
    <location>
        <begin position="93"/>
        <end position="101"/>
    </location>
</feature>
<feature type="helix" evidence="11">
    <location>
        <begin position="107"/>
        <end position="122"/>
    </location>
</feature>
<feature type="strand" evidence="11">
    <location>
        <begin position="128"/>
        <end position="130"/>
    </location>
</feature>
<feature type="strand" evidence="11">
    <location>
        <begin position="132"/>
        <end position="140"/>
    </location>
</feature>
<feature type="strand" evidence="11">
    <location>
        <begin position="143"/>
        <end position="149"/>
    </location>
</feature>
<feature type="helix" evidence="11">
    <location>
        <begin position="155"/>
        <end position="157"/>
    </location>
</feature>
<feature type="helix" evidence="11">
    <location>
        <begin position="160"/>
        <end position="162"/>
    </location>
</feature>
<feature type="helix" evidence="11">
    <location>
        <begin position="170"/>
        <end position="179"/>
    </location>
</feature>
<feature type="strand" evidence="11">
    <location>
        <begin position="188"/>
        <end position="192"/>
    </location>
</feature>
<feature type="helix" evidence="11">
    <location>
        <begin position="197"/>
        <end position="206"/>
    </location>
</feature>
<feature type="strand" evidence="11">
    <location>
        <begin position="212"/>
        <end position="217"/>
    </location>
</feature>
<feature type="helix" evidence="11">
    <location>
        <begin position="219"/>
        <end position="231"/>
    </location>
</feature>
<feature type="strand" evidence="11">
    <location>
        <begin position="238"/>
        <end position="241"/>
    </location>
</feature>
<feature type="helix" evidence="11">
    <location>
        <begin position="244"/>
        <end position="249"/>
    </location>
</feature>
<feature type="strand" evidence="11">
    <location>
        <begin position="255"/>
        <end position="259"/>
    </location>
</feature>
<feature type="helix" evidence="11">
    <location>
        <begin position="271"/>
        <end position="286"/>
    </location>
</feature>
<feature type="strand" evidence="11">
    <location>
        <begin position="293"/>
        <end position="299"/>
    </location>
</feature>
<feature type="helix" evidence="11">
    <location>
        <begin position="301"/>
        <end position="307"/>
    </location>
</feature>
<feature type="strand" evidence="11">
    <location>
        <begin position="312"/>
        <end position="319"/>
    </location>
</feature>
<feature type="strand" evidence="11">
    <location>
        <begin position="328"/>
        <end position="334"/>
    </location>
</feature>
<proteinExistence type="evidence at protein level"/>
<dbReference type="EC" id="2.1.1.256" evidence="4 5"/>
<dbReference type="EMBL" id="AE017221">
    <property type="protein sequence ID" value="AAS81499.1"/>
    <property type="molecule type" value="Genomic_DNA"/>
</dbReference>
<dbReference type="RefSeq" id="WP_011173568.1">
    <property type="nucleotide sequence ID" value="NC_005835.1"/>
</dbReference>
<dbReference type="PDB" id="3TMA">
    <property type="method" value="X-ray"/>
    <property type="resolution" value="2.05 A"/>
    <property type="chains" value="A=1-335"/>
</dbReference>
<dbReference type="PDBsum" id="3TMA"/>
<dbReference type="SMR" id="Q72IH5"/>
<dbReference type="KEGG" id="tth:TT_C1157"/>
<dbReference type="eggNOG" id="COG0116">
    <property type="taxonomic scope" value="Bacteria"/>
</dbReference>
<dbReference type="HOGENOM" id="CLU_032119_0_0_0"/>
<dbReference type="BRENDA" id="2.1.1.256">
    <property type="organism ID" value="2305"/>
</dbReference>
<dbReference type="EvolutionaryTrace" id="Q72IH5"/>
<dbReference type="Proteomes" id="UP000000592">
    <property type="component" value="Chromosome"/>
</dbReference>
<dbReference type="GO" id="GO:0005737">
    <property type="term" value="C:cytoplasm"/>
    <property type="evidence" value="ECO:0007669"/>
    <property type="project" value="UniProtKB-SubCell"/>
</dbReference>
<dbReference type="GO" id="GO:0003723">
    <property type="term" value="F:RNA binding"/>
    <property type="evidence" value="ECO:0007669"/>
    <property type="project" value="UniProtKB-KW"/>
</dbReference>
<dbReference type="GO" id="GO:0160117">
    <property type="term" value="F:tRNA (guanine(6)-N2)-methyltransferase activity"/>
    <property type="evidence" value="ECO:0007669"/>
    <property type="project" value="UniProtKB-EC"/>
</dbReference>
<dbReference type="GO" id="GO:0030488">
    <property type="term" value="P:tRNA methylation"/>
    <property type="evidence" value="ECO:0007669"/>
    <property type="project" value="TreeGrafter"/>
</dbReference>
<dbReference type="CDD" id="cd02440">
    <property type="entry name" value="AdoMet_MTases"/>
    <property type="match status" value="1"/>
</dbReference>
<dbReference type="Gene3D" id="3.30.2130.30">
    <property type="match status" value="1"/>
</dbReference>
<dbReference type="Gene3D" id="3.40.50.150">
    <property type="entry name" value="Vaccinia Virus protein VP39"/>
    <property type="match status" value="1"/>
</dbReference>
<dbReference type="InterPro" id="IPR000241">
    <property type="entry name" value="RlmKL-like_Mtase"/>
</dbReference>
<dbReference type="InterPro" id="IPR029063">
    <property type="entry name" value="SAM-dependent_MTases_sf"/>
</dbReference>
<dbReference type="InterPro" id="IPR004114">
    <property type="entry name" value="THUMP_dom"/>
</dbReference>
<dbReference type="PANTHER" id="PTHR14911">
    <property type="entry name" value="THUMP DOMAIN-CONTAINING"/>
    <property type="match status" value="1"/>
</dbReference>
<dbReference type="PANTHER" id="PTHR14911:SF13">
    <property type="entry name" value="TRNA (GUANINE(6)-N2)-METHYLTRANSFERASE THUMP3"/>
    <property type="match status" value="1"/>
</dbReference>
<dbReference type="Pfam" id="PF21888">
    <property type="entry name" value="NFLD"/>
    <property type="match status" value="1"/>
</dbReference>
<dbReference type="Pfam" id="PF02926">
    <property type="entry name" value="THUMP"/>
    <property type="match status" value="1"/>
</dbReference>
<dbReference type="Pfam" id="PF01170">
    <property type="entry name" value="UPF0020"/>
    <property type="match status" value="1"/>
</dbReference>
<dbReference type="PRINTS" id="PR00507">
    <property type="entry name" value="N12N6MTFRASE"/>
</dbReference>
<dbReference type="SMART" id="SM00981">
    <property type="entry name" value="THUMP"/>
    <property type="match status" value="1"/>
</dbReference>
<dbReference type="SUPFAM" id="SSF53335">
    <property type="entry name" value="S-adenosyl-L-methionine-dependent methyltransferases"/>
    <property type="match status" value="1"/>
</dbReference>
<dbReference type="SUPFAM" id="SSF143437">
    <property type="entry name" value="THUMP domain-like"/>
    <property type="match status" value="1"/>
</dbReference>
<dbReference type="PROSITE" id="PS51165">
    <property type="entry name" value="THUMP"/>
    <property type="match status" value="1"/>
</dbReference>
<comment type="function">
    <text evidence="4 5">S-adenosyl-L-methionine-dependent methyltransferase that catalyzes the methylation of the guanosine nucleotide at position 6 (m2G6) in tRNA(Phe).</text>
</comment>
<comment type="catalytic activity">
    <reaction evidence="4 5">
        <text>guanosine(6) in tRNA + S-adenosyl-L-methionine = N(2)-methylguanosine(6) in tRNA + S-adenosyl-L-homocysteine + H(+)</text>
        <dbReference type="Rhea" id="RHEA:51116"/>
        <dbReference type="Rhea" id="RHEA-COMP:12888"/>
        <dbReference type="Rhea" id="RHEA-COMP:12889"/>
        <dbReference type="ChEBI" id="CHEBI:15378"/>
        <dbReference type="ChEBI" id="CHEBI:57856"/>
        <dbReference type="ChEBI" id="CHEBI:59789"/>
        <dbReference type="ChEBI" id="CHEBI:74269"/>
        <dbReference type="ChEBI" id="CHEBI:74481"/>
        <dbReference type="EC" id="2.1.1.256"/>
    </reaction>
</comment>
<comment type="subunit">
    <text evidence="3 4 5">Monomer in solution.</text>
</comment>
<comment type="subcellular location">
    <subcellularLocation>
        <location evidence="3">Cytoplasm</location>
    </subcellularLocation>
</comment>
<comment type="domain">
    <text evidence="5">Consists of an N-terminal THUMP domain fused to a catalytic Rossmann-fold MTase (RFM) domain.</text>
</comment>
<comment type="disruption phenotype">
    <text evidence="4">Inactivation of the gene leads to a total absence of m(2)G in tRNA but does not affect cell growth or the formation of other modified nucleosides in tRNA(Phe).</text>
</comment>
<comment type="similarity">
    <text evidence="8">Belongs to the methyltransferase superfamily.</text>
</comment>
<reference key="1">
    <citation type="journal article" date="2004" name="Nat. Biotechnol.">
        <title>The genome sequence of the extreme thermophile Thermus thermophilus.</title>
        <authorList>
            <person name="Henne A."/>
            <person name="Brueggemann H."/>
            <person name="Raasch C."/>
            <person name="Wiezer A."/>
            <person name="Hartsch T."/>
            <person name="Liesegang H."/>
            <person name="Johann A."/>
            <person name="Lienard T."/>
            <person name="Gohl O."/>
            <person name="Martinez-Arias R."/>
            <person name="Jacobi C."/>
            <person name="Starkuviene V."/>
            <person name="Schlenczeck S."/>
            <person name="Dencker S."/>
            <person name="Huber R."/>
            <person name="Klenk H.-P."/>
            <person name="Kramer W."/>
            <person name="Merkl R."/>
            <person name="Gottschalk G."/>
            <person name="Fritz H.-J."/>
        </authorList>
    </citation>
    <scope>NUCLEOTIDE SEQUENCE [LARGE SCALE GENOMIC DNA]</scope>
    <source>
        <strain>ATCC BAA-163 / DSM 7039 / HB27</strain>
    </source>
</reference>
<reference key="2">
    <citation type="journal article" date="2011" name="Acta Crystallogr. F">
        <title>Crystallization and preliminary X-ray crystallographic analysis of putative tRNA-modification enzymes from Pyrococcus furiosus and Thermus thermophilus.</title>
        <authorList>
            <person name="Fislage M."/>
            <person name="Roovers M."/>
            <person name="Muennich S."/>
            <person name="Droogmans L."/>
            <person name="Versees W."/>
        </authorList>
    </citation>
    <scope>SUBUNIT</scope>
    <scope>SUBCELLULAR LOCATION</scope>
    <scope>CRYSTALLIZATION</scope>
</reference>
<reference key="3">
    <citation type="journal article" date="2012" name="RNA">
        <title>The open reading frame TTC1157 of Thermus thermophilus HB27 encodes the methyltransferase forming N2-methylguanosine at position 6 in tRNA.</title>
        <authorList>
            <person name="Roovers M."/>
            <person name="Oudjama Y."/>
            <person name="Fislage M."/>
            <person name="Bujnicki J.M."/>
            <person name="Versees W."/>
            <person name="Droogmans L."/>
        </authorList>
    </citation>
    <scope>FUNCTION</scope>
    <scope>CATALYTIC ACTIVITY</scope>
    <scope>SUBUNIT</scope>
    <scope>DISRUPTION PHENOTYPE</scope>
</reference>
<reference evidence="10" key="4">
    <citation type="journal article" date="2012" name="Nucleic Acids Res.">
        <title>Crystal structures of the tRNA:m2G6 methyltransferase Trm14/TrmN from two domains of life.</title>
        <authorList>
            <person name="Fislage M."/>
            <person name="Roovers M."/>
            <person name="Tuszynska I."/>
            <person name="Bujnicki J.M."/>
            <person name="Droogmans L."/>
            <person name="Versees W."/>
        </authorList>
    </citation>
    <scope>X-RAY CRYSTALLOGRAPHY (2.05 ANGSTROMS)</scope>
    <scope>FUNCTION</scope>
    <scope>CATALYTIC ACTIVITY</scope>
    <scope>SUBUNIT</scope>
    <scope>DOMAIN</scope>
    <scope>MUTAGENESIS OF HIS-263</scope>
    <source>
        <strain>ATCC BAA-163 / DSM 7039 / HB27</strain>
    </source>
</reference>
<gene>
    <name evidence="6" type="primary">trmN</name>
    <name evidence="9" type="ordered locus">TT_C1157</name>
</gene>
<name>TRMN_THET2</name>